<dbReference type="EMBL" id="CP001001">
    <property type="protein sequence ID" value="ACB25931.1"/>
    <property type="molecule type" value="Genomic_DNA"/>
</dbReference>
<dbReference type="RefSeq" id="WP_012320888.1">
    <property type="nucleotide sequence ID" value="NC_010505.1"/>
</dbReference>
<dbReference type="SMR" id="B1LZ89"/>
<dbReference type="STRING" id="426355.Mrad2831_3957"/>
<dbReference type="GeneID" id="6140012"/>
<dbReference type="KEGG" id="mrd:Mrad2831_3957"/>
<dbReference type="PATRIC" id="fig|426355.14.peg.4052"/>
<dbReference type="eggNOG" id="COG1327">
    <property type="taxonomic scope" value="Bacteria"/>
</dbReference>
<dbReference type="HOGENOM" id="CLU_108412_0_1_5"/>
<dbReference type="OrthoDB" id="9807461at2"/>
<dbReference type="Proteomes" id="UP000006589">
    <property type="component" value="Chromosome"/>
</dbReference>
<dbReference type="GO" id="GO:0005524">
    <property type="term" value="F:ATP binding"/>
    <property type="evidence" value="ECO:0007669"/>
    <property type="project" value="UniProtKB-KW"/>
</dbReference>
<dbReference type="GO" id="GO:0003677">
    <property type="term" value="F:DNA binding"/>
    <property type="evidence" value="ECO:0007669"/>
    <property type="project" value="UniProtKB-KW"/>
</dbReference>
<dbReference type="GO" id="GO:0008270">
    <property type="term" value="F:zinc ion binding"/>
    <property type="evidence" value="ECO:0007669"/>
    <property type="project" value="UniProtKB-UniRule"/>
</dbReference>
<dbReference type="GO" id="GO:0045892">
    <property type="term" value="P:negative regulation of DNA-templated transcription"/>
    <property type="evidence" value="ECO:0007669"/>
    <property type="project" value="UniProtKB-UniRule"/>
</dbReference>
<dbReference type="HAMAP" id="MF_00440">
    <property type="entry name" value="NrdR"/>
    <property type="match status" value="1"/>
</dbReference>
<dbReference type="InterPro" id="IPR005144">
    <property type="entry name" value="ATP-cone_dom"/>
</dbReference>
<dbReference type="InterPro" id="IPR055173">
    <property type="entry name" value="NrdR-like_N"/>
</dbReference>
<dbReference type="InterPro" id="IPR003796">
    <property type="entry name" value="RNR_NrdR-like"/>
</dbReference>
<dbReference type="NCBIfam" id="TIGR00244">
    <property type="entry name" value="transcriptional regulator NrdR"/>
    <property type="match status" value="1"/>
</dbReference>
<dbReference type="PANTHER" id="PTHR30455">
    <property type="entry name" value="TRANSCRIPTIONAL REPRESSOR NRDR"/>
    <property type="match status" value="1"/>
</dbReference>
<dbReference type="PANTHER" id="PTHR30455:SF2">
    <property type="entry name" value="TRANSCRIPTIONAL REPRESSOR NRDR"/>
    <property type="match status" value="1"/>
</dbReference>
<dbReference type="Pfam" id="PF03477">
    <property type="entry name" value="ATP-cone"/>
    <property type="match status" value="1"/>
</dbReference>
<dbReference type="Pfam" id="PF22811">
    <property type="entry name" value="Zn_ribbon_NrdR"/>
    <property type="match status" value="1"/>
</dbReference>
<dbReference type="PROSITE" id="PS51161">
    <property type="entry name" value="ATP_CONE"/>
    <property type="match status" value="1"/>
</dbReference>
<reference key="1">
    <citation type="submission" date="2008-03" db="EMBL/GenBank/DDBJ databases">
        <title>Complete sequence of chromosome of Methylobacterium radiotolerans JCM 2831.</title>
        <authorList>
            <consortium name="US DOE Joint Genome Institute"/>
            <person name="Copeland A."/>
            <person name="Lucas S."/>
            <person name="Lapidus A."/>
            <person name="Glavina del Rio T."/>
            <person name="Dalin E."/>
            <person name="Tice H."/>
            <person name="Bruce D."/>
            <person name="Goodwin L."/>
            <person name="Pitluck S."/>
            <person name="Kiss H."/>
            <person name="Brettin T."/>
            <person name="Detter J.C."/>
            <person name="Han C."/>
            <person name="Kuske C.R."/>
            <person name="Schmutz J."/>
            <person name="Larimer F."/>
            <person name="Land M."/>
            <person name="Hauser L."/>
            <person name="Kyrpides N."/>
            <person name="Mikhailova N."/>
            <person name="Marx C.J."/>
            <person name="Richardson P."/>
        </authorList>
    </citation>
    <scope>NUCLEOTIDE SEQUENCE [LARGE SCALE GENOMIC DNA]</scope>
    <source>
        <strain>ATCC 27329 / DSM 1819 / JCM 2831 / NBRC 15690 / NCIMB 10815 / 0-1</strain>
    </source>
</reference>
<comment type="function">
    <text evidence="1">Negatively regulates transcription of bacterial ribonucleotide reductase nrd genes and operons by binding to NrdR-boxes.</text>
</comment>
<comment type="cofactor">
    <cofactor evidence="1">
        <name>Zn(2+)</name>
        <dbReference type="ChEBI" id="CHEBI:29105"/>
    </cofactor>
    <text evidence="1">Binds 1 zinc ion.</text>
</comment>
<comment type="similarity">
    <text evidence="1">Belongs to the NrdR family.</text>
</comment>
<gene>
    <name evidence="1" type="primary">nrdR</name>
    <name type="ordered locus">Mrad2831_3957</name>
</gene>
<protein>
    <recommendedName>
        <fullName evidence="1">Transcriptional repressor NrdR</fullName>
    </recommendedName>
</protein>
<evidence type="ECO:0000255" key="1">
    <source>
        <dbReference type="HAMAP-Rule" id="MF_00440"/>
    </source>
</evidence>
<evidence type="ECO:0000256" key="2">
    <source>
        <dbReference type="SAM" id="MobiDB-lite"/>
    </source>
</evidence>
<feature type="chain" id="PRO_1000124524" description="Transcriptional repressor NrdR">
    <location>
        <begin position="1"/>
        <end position="177"/>
    </location>
</feature>
<feature type="domain" description="ATP-cone" evidence="1">
    <location>
        <begin position="49"/>
        <end position="139"/>
    </location>
</feature>
<feature type="zinc finger region" evidence="1">
    <location>
        <begin position="3"/>
        <end position="34"/>
    </location>
</feature>
<feature type="region of interest" description="Disordered" evidence="2">
    <location>
        <begin position="148"/>
        <end position="177"/>
    </location>
</feature>
<proteinExistence type="inferred from homology"/>
<name>NRDR_METRJ</name>
<keyword id="KW-0067">ATP-binding</keyword>
<keyword id="KW-0238">DNA-binding</keyword>
<keyword id="KW-0479">Metal-binding</keyword>
<keyword id="KW-0547">Nucleotide-binding</keyword>
<keyword id="KW-0678">Repressor</keyword>
<keyword id="KW-0804">Transcription</keyword>
<keyword id="KW-0805">Transcription regulation</keyword>
<keyword id="KW-0862">Zinc</keyword>
<keyword id="KW-0863">Zinc-finger</keyword>
<organism>
    <name type="scientific">Methylobacterium radiotolerans (strain ATCC 27329 / DSM 1819 / JCM 2831 / NBRC 15690 / NCIMB 10815 / 0-1)</name>
    <dbReference type="NCBI Taxonomy" id="426355"/>
    <lineage>
        <taxon>Bacteria</taxon>
        <taxon>Pseudomonadati</taxon>
        <taxon>Pseudomonadota</taxon>
        <taxon>Alphaproteobacteria</taxon>
        <taxon>Hyphomicrobiales</taxon>
        <taxon>Methylobacteriaceae</taxon>
        <taxon>Methylobacterium</taxon>
    </lineage>
</organism>
<sequence>MRCPYCGGSETQVKDSRPSEDGAAIRRRRVCPDCAGRFTTFERVQLREVVVLKRSGKRVPFDRDKLQRSIDVALRKRAVDPERIERLVSGITRQLESAGEPEVTSEAIGELVMAGLKGLDDVAYVRFASVYKNFREARDFEELLGTLSDGMPVPAAAPEAEGDPEPEASGRRRAGRP</sequence>
<accession>B1LZ89</accession>